<accession>Q2IW86</accession>
<dbReference type="EC" id="1.1.1.267" evidence="1"/>
<dbReference type="EMBL" id="CP000250">
    <property type="protein sequence ID" value="ABD07524.1"/>
    <property type="molecule type" value="Genomic_DNA"/>
</dbReference>
<dbReference type="RefSeq" id="WP_011441709.1">
    <property type="nucleotide sequence ID" value="NC_007778.1"/>
</dbReference>
<dbReference type="SMR" id="Q2IW86"/>
<dbReference type="STRING" id="316058.RPB_2822"/>
<dbReference type="KEGG" id="rpb:RPB_2822"/>
<dbReference type="eggNOG" id="COG0743">
    <property type="taxonomic scope" value="Bacteria"/>
</dbReference>
<dbReference type="HOGENOM" id="CLU_035714_4_0_5"/>
<dbReference type="OrthoDB" id="9806546at2"/>
<dbReference type="UniPathway" id="UPA00056">
    <property type="reaction ID" value="UER00092"/>
</dbReference>
<dbReference type="Proteomes" id="UP000008809">
    <property type="component" value="Chromosome"/>
</dbReference>
<dbReference type="GO" id="GO:0030604">
    <property type="term" value="F:1-deoxy-D-xylulose-5-phosphate reductoisomerase activity"/>
    <property type="evidence" value="ECO:0007669"/>
    <property type="project" value="UniProtKB-UniRule"/>
</dbReference>
<dbReference type="GO" id="GO:0030145">
    <property type="term" value="F:manganese ion binding"/>
    <property type="evidence" value="ECO:0007669"/>
    <property type="project" value="TreeGrafter"/>
</dbReference>
<dbReference type="GO" id="GO:0070402">
    <property type="term" value="F:NADPH binding"/>
    <property type="evidence" value="ECO:0007669"/>
    <property type="project" value="InterPro"/>
</dbReference>
<dbReference type="GO" id="GO:0051484">
    <property type="term" value="P:isopentenyl diphosphate biosynthetic process, methylerythritol 4-phosphate pathway involved in terpenoid biosynthetic process"/>
    <property type="evidence" value="ECO:0007669"/>
    <property type="project" value="TreeGrafter"/>
</dbReference>
<dbReference type="FunFam" id="3.40.50.720:FF:000045">
    <property type="entry name" value="1-deoxy-D-xylulose 5-phosphate reductoisomerase"/>
    <property type="match status" value="1"/>
</dbReference>
<dbReference type="Gene3D" id="1.10.1740.10">
    <property type="match status" value="1"/>
</dbReference>
<dbReference type="Gene3D" id="3.40.50.720">
    <property type="entry name" value="NAD(P)-binding Rossmann-like Domain"/>
    <property type="match status" value="1"/>
</dbReference>
<dbReference type="HAMAP" id="MF_00183">
    <property type="entry name" value="DXP_reductoisom"/>
    <property type="match status" value="1"/>
</dbReference>
<dbReference type="InterPro" id="IPR003821">
    <property type="entry name" value="DXP_reductoisomerase"/>
</dbReference>
<dbReference type="InterPro" id="IPR013644">
    <property type="entry name" value="DXP_reductoisomerase_C"/>
</dbReference>
<dbReference type="InterPro" id="IPR013512">
    <property type="entry name" value="DXP_reductoisomerase_N"/>
</dbReference>
<dbReference type="InterPro" id="IPR026877">
    <property type="entry name" value="DXPR_C"/>
</dbReference>
<dbReference type="InterPro" id="IPR036169">
    <property type="entry name" value="DXPR_C_sf"/>
</dbReference>
<dbReference type="InterPro" id="IPR036291">
    <property type="entry name" value="NAD(P)-bd_dom_sf"/>
</dbReference>
<dbReference type="NCBIfam" id="TIGR00243">
    <property type="entry name" value="Dxr"/>
    <property type="match status" value="1"/>
</dbReference>
<dbReference type="PANTHER" id="PTHR30525">
    <property type="entry name" value="1-DEOXY-D-XYLULOSE 5-PHOSPHATE REDUCTOISOMERASE"/>
    <property type="match status" value="1"/>
</dbReference>
<dbReference type="PANTHER" id="PTHR30525:SF0">
    <property type="entry name" value="1-DEOXY-D-XYLULOSE 5-PHOSPHATE REDUCTOISOMERASE, CHLOROPLASTIC"/>
    <property type="match status" value="1"/>
</dbReference>
<dbReference type="Pfam" id="PF08436">
    <property type="entry name" value="DXP_redisom_C"/>
    <property type="match status" value="1"/>
</dbReference>
<dbReference type="Pfam" id="PF02670">
    <property type="entry name" value="DXP_reductoisom"/>
    <property type="match status" value="1"/>
</dbReference>
<dbReference type="Pfam" id="PF13288">
    <property type="entry name" value="DXPR_C"/>
    <property type="match status" value="1"/>
</dbReference>
<dbReference type="PIRSF" id="PIRSF006205">
    <property type="entry name" value="Dxp_reductismrs"/>
    <property type="match status" value="1"/>
</dbReference>
<dbReference type="SUPFAM" id="SSF69055">
    <property type="entry name" value="1-deoxy-D-xylulose-5-phosphate reductoisomerase, C-terminal domain"/>
    <property type="match status" value="1"/>
</dbReference>
<dbReference type="SUPFAM" id="SSF55347">
    <property type="entry name" value="Glyceraldehyde-3-phosphate dehydrogenase-like, C-terminal domain"/>
    <property type="match status" value="1"/>
</dbReference>
<dbReference type="SUPFAM" id="SSF51735">
    <property type="entry name" value="NAD(P)-binding Rossmann-fold domains"/>
    <property type="match status" value="1"/>
</dbReference>
<sequence>MSAVPLKNTDAAHDGVRSISVLGATGSIGDSTMDLLRAAPEKYRVEALTGNANVAGLAKLAKEFNARFVAVADPARLGELRAALAGTDIAYGAGESAVIEAAARPADWVMAAISGAAGLKPALAAVDRGATVALANKECLVCAGDFFMSRAVAAGSCILPADSEHNALFQALASGNRHELTRVIITASGGPFRTWSAADIEQATLAQALKHPNWSMGQKITIDSASMMNKGLEVIEASYLFALSPDEIDVLVHPQSIVHGMVEFADHSVVAQLGAPDMRIPIAHCLGWPDRIVGRAARLDLAKIGQLTFEAPDFERFPGLRLAYDALRAGNGATTVYNAANEIAVAAFIAQKIRFGAIARLVEDTLNAWIRAGNLAPLGSADDAIAVDHNARKMAATLLPQIAAKAS</sequence>
<feature type="chain" id="PRO_1000020299" description="1-deoxy-D-xylulose 5-phosphate reductoisomerase">
    <location>
        <begin position="1"/>
        <end position="407"/>
    </location>
</feature>
<feature type="binding site" evidence="1">
    <location>
        <position position="25"/>
    </location>
    <ligand>
        <name>NADPH</name>
        <dbReference type="ChEBI" id="CHEBI:57783"/>
    </ligand>
</feature>
<feature type="binding site" evidence="1">
    <location>
        <position position="26"/>
    </location>
    <ligand>
        <name>NADPH</name>
        <dbReference type="ChEBI" id="CHEBI:57783"/>
    </ligand>
</feature>
<feature type="binding site" evidence="1">
    <location>
        <position position="27"/>
    </location>
    <ligand>
        <name>NADPH</name>
        <dbReference type="ChEBI" id="CHEBI:57783"/>
    </ligand>
</feature>
<feature type="binding site" evidence="1">
    <location>
        <position position="28"/>
    </location>
    <ligand>
        <name>NADPH</name>
        <dbReference type="ChEBI" id="CHEBI:57783"/>
    </ligand>
</feature>
<feature type="binding site" evidence="1">
    <location>
        <position position="53"/>
    </location>
    <ligand>
        <name>NADPH</name>
        <dbReference type="ChEBI" id="CHEBI:57783"/>
    </ligand>
</feature>
<feature type="binding site" evidence="1">
    <location>
        <position position="136"/>
    </location>
    <ligand>
        <name>NADPH</name>
        <dbReference type="ChEBI" id="CHEBI:57783"/>
    </ligand>
</feature>
<feature type="binding site" evidence="1">
    <location>
        <position position="137"/>
    </location>
    <ligand>
        <name>1-deoxy-D-xylulose 5-phosphate</name>
        <dbReference type="ChEBI" id="CHEBI:57792"/>
    </ligand>
</feature>
<feature type="binding site" evidence="1">
    <location>
        <position position="138"/>
    </location>
    <ligand>
        <name>NADPH</name>
        <dbReference type="ChEBI" id="CHEBI:57783"/>
    </ligand>
</feature>
<feature type="binding site" evidence="1">
    <location>
        <position position="162"/>
    </location>
    <ligand>
        <name>Mn(2+)</name>
        <dbReference type="ChEBI" id="CHEBI:29035"/>
    </ligand>
</feature>
<feature type="binding site" evidence="1">
    <location>
        <position position="163"/>
    </location>
    <ligand>
        <name>1-deoxy-D-xylulose 5-phosphate</name>
        <dbReference type="ChEBI" id="CHEBI:57792"/>
    </ligand>
</feature>
<feature type="binding site" evidence="1">
    <location>
        <position position="164"/>
    </location>
    <ligand>
        <name>1-deoxy-D-xylulose 5-phosphate</name>
        <dbReference type="ChEBI" id="CHEBI:57792"/>
    </ligand>
</feature>
<feature type="binding site" evidence="1">
    <location>
        <position position="164"/>
    </location>
    <ligand>
        <name>Mn(2+)</name>
        <dbReference type="ChEBI" id="CHEBI:29035"/>
    </ligand>
</feature>
<feature type="binding site" evidence="1">
    <location>
        <position position="188"/>
    </location>
    <ligand>
        <name>1-deoxy-D-xylulose 5-phosphate</name>
        <dbReference type="ChEBI" id="CHEBI:57792"/>
    </ligand>
</feature>
<feature type="binding site" evidence="1">
    <location>
        <position position="211"/>
    </location>
    <ligand>
        <name>1-deoxy-D-xylulose 5-phosphate</name>
        <dbReference type="ChEBI" id="CHEBI:57792"/>
    </ligand>
</feature>
<feature type="binding site" evidence="1">
    <location>
        <position position="217"/>
    </location>
    <ligand>
        <name>NADPH</name>
        <dbReference type="ChEBI" id="CHEBI:57783"/>
    </ligand>
</feature>
<feature type="binding site" evidence="1">
    <location>
        <position position="224"/>
    </location>
    <ligand>
        <name>1-deoxy-D-xylulose 5-phosphate</name>
        <dbReference type="ChEBI" id="CHEBI:57792"/>
    </ligand>
</feature>
<feature type="binding site" evidence="1">
    <location>
        <position position="229"/>
    </location>
    <ligand>
        <name>1-deoxy-D-xylulose 5-phosphate</name>
        <dbReference type="ChEBI" id="CHEBI:57792"/>
    </ligand>
</feature>
<feature type="binding site" evidence="1">
    <location>
        <position position="230"/>
    </location>
    <ligand>
        <name>1-deoxy-D-xylulose 5-phosphate</name>
        <dbReference type="ChEBI" id="CHEBI:57792"/>
    </ligand>
</feature>
<feature type="binding site" evidence="1">
    <location>
        <position position="233"/>
    </location>
    <ligand>
        <name>1-deoxy-D-xylulose 5-phosphate</name>
        <dbReference type="ChEBI" id="CHEBI:57792"/>
    </ligand>
</feature>
<feature type="binding site" evidence="1">
    <location>
        <position position="233"/>
    </location>
    <ligand>
        <name>Mn(2+)</name>
        <dbReference type="ChEBI" id="CHEBI:29035"/>
    </ligand>
</feature>
<proteinExistence type="inferred from homology"/>
<keyword id="KW-0414">Isoprene biosynthesis</keyword>
<keyword id="KW-0464">Manganese</keyword>
<keyword id="KW-0479">Metal-binding</keyword>
<keyword id="KW-0521">NADP</keyword>
<keyword id="KW-0560">Oxidoreductase</keyword>
<keyword id="KW-1185">Reference proteome</keyword>
<protein>
    <recommendedName>
        <fullName evidence="1">1-deoxy-D-xylulose 5-phosphate reductoisomerase</fullName>
        <shortName evidence="1">DXP reductoisomerase</shortName>
        <ecNumber evidence="1">1.1.1.267</ecNumber>
    </recommendedName>
    <alternativeName>
        <fullName evidence="1">1-deoxyxylulose-5-phosphate reductoisomerase</fullName>
    </alternativeName>
    <alternativeName>
        <fullName evidence="1">2-C-methyl-D-erythritol 4-phosphate synthase</fullName>
    </alternativeName>
</protein>
<comment type="function">
    <text evidence="1">Catalyzes the NADPH-dependent rearrangement and reduction of 1-deoxy-D-xylulose-5-phosphate (DXP) to 2-C-methyl-D-erythritol 4-phosphate (MEP).</text>
</comment>
<comment type="catalytic activity">
    <reaction evidence="1">
        <text>2-C-methyl-D-erythritol 4-phosphate + NADP(+) = 1-deoxy-D-xylulose 5-phosphate + NADPH + H(+)</text>
        <dbReference type="Rhea" id="RHEA:13717"/>
        <dbReference type="ChEBI" id="CHEBI:15378"/>
        <dbReference type="ChEBI" id="CHEBI:57783"/>
        <dbReference type="ChEBI" id="CHEBI:57792"/>
        <dbReference type="ChEBI" id="CHEBI:58262"/>
        <dbReference type="ChEBI" id="CHEBI:58349"/>
        <dbReference type="EC" id="1.1.1.267"/>
    </reaction>
    <physiologicalReaction direction="right-to-left" evidence="1">
        <dbReference type="Rhea" id="RHEA:13719"/>
    </physiologicalReaction>
</comment>
<comment type="cofactor">
    <cofactor evidence="1">
        <name>Mg(2+)</name>
        <dbReference type="ChEBI" id="CHEBI:18420"/>
    </cofactor>
    <cofactor evidence="1">
        <name>Mn(2+)</name>
        <dbReference type="ChEBI" id="CHEBI:29035"/>
    </cofactor>
</comment>
<comment type="pathway">
    <text evidence="1">Isoprenoid biosynthesis; isopentenyl diphosphate biosynthesis via DXP pathway; isopentenyl diphosphate from 1-deoxy-D-xylulose 5-phosphate: step 1/6.</text>
</comment>
<comment type="similarity">
    <text evidence="1">Belongs to the DXR family.</text>
</comment>
<organism>
    <name type="scientific">Rhodopseudomonas palustris (strain HaA2)</name>
    <dbReference type="NCBI Taxonomy" id="316058"/>
    <lineage>
        <taxon>Bacteria</taxon>
        <taxon>Pseudomonadati</taxon>
        <taxon>Pseudomonadota</taxon>
        <taxon>Alphaproteobacteria</taxon>
        <taxon>Hyphomicrobiales</taxon>
        <taxon>Nitrobacteraceae</taxon>
        <taxon>Rhodopseudomonas</taxon>
    </lineage>
</organism>
<evidence type="ECO:0000255" key="1">
    <source>
        <dbReference type="HAMAP-Rule" id="MF_00183"/>
    </source>
</evidence>
<reference key="1">
    <citation type="submission" date="2006-01" db="EMBL/GenBank/DDBJ databases">
        <title>Complete sequence of Rhodopseudomonas palustris HaA2.</title>
        <authorList>
            <consortium name="US DOE Joint Genome Institute"/>
            <person name="Copeland A."/>
            <person name="Lucas S."/>
            <person name="Lapidus A."/>
            <person name="Barry K."/>
            <person name="Detter J.C."/>
            <person name="Glavina T."/>
            <person name="Hammon N."/>
            <person name="Israni S."/>
            <person name="Pitluck S."/>
            <person name="Chain P."/>
            <person name="Malfatti S."/>
            <person name="Shin M."/>
            <person name="Vergez L."/>
            <person name="Schmutz J."/>
            <person name="Larimer F."/>
            <person name="Land M."/>
            <person name="Hauser L."/>
            <person name="Pelletier D.A."/>
            <person name="Kyrpides N."/>
            <person name="Anderson I."/>
            <person name="Oda Y."/>
            <person name="Harwood C.S."/>
            <person name="Richardson P."/>
        </authorList>
    </citation>
    <scope>NUCLEOTIDE SEQUENCE [LARGE SCALE GENOMIC DNA]</scope>
    <source>
        <strain>HaA2</strain>
    </source>
</reference>
<name>DXR_RHOP2</name>
<gene>
    <name evidence="1" type="primary">dxr</name>
    <name type="ordered locus">RPB_2822</name>
</gene>